<reference key="1">
    <citation type="journal article" date="2010" name="Science">
        <title>The genome of the Western clawed frog Xenopus tropicalis.</title>
        <authorList>
            <person name="Hellsten U."/>
            <person name="Harland R.M."/>
            <person name="Gilchrist M.J."/>
            <person name="Hendrix D."/>
            <person name="Jurka J."/>
            <person name="Kapitonov V."/>
            <person name="Ovcharenko I."/>
            <person name="Putnam N.H."/>
            <person name="Shu S."/>
            <person name="Taher L."/>
            <person name="Blitz I.L."/>
            <person name="Blumberg B."/>
            <person name="Dichmann D.S."/>
            <person name="Dubchak I."/>
            <person name="Amaya E."/>
            <person name="Detter J.C."/>
            <person name="Fletcher R."/>
            <person name="Gerhard D.S."/>
            <person name="Goodstein D."/>
            <person name="Graves T."/>
            <person name="Grigoriev I.V."/>
            <person name="Grimwood J."/>
            <person name="Kawashima T."/>
            <person name="Lindquist E."/>
            <person name="Lucas S.M."/>
            <person name="Mead P.E."/>
            <person name="Mitros T."/>
            <person name="Ogino H."/>
            <person name="Ohta Y."/>
            <person name="Poliakov A.V."/>
            <person name="Pollet N."/>
            <person name="Robert J."/>
            <person name="Salamov A."/>
            <person name="Sater A.K."/>
            <person name="Schmutz J."/>
            <person name="Terry A."/>
            <person name="Vize P.D."/>
            <person name="Warren W.C."/>
            <person name="Wells D."/>
            <person name="Wills A."/>
            <person name="Wilson R.K."/>
            <person name="Zimmerman L.B."/>
            <person name="Zorn A.M."/>
            <person name="Grainger R."/>
            <person name="Grammer T."/>
            <person name="Khokha M.K."/>
            <person name="Richardson P.M."/>
            <person name="Rokhsar D.S."/>
        </authorList>
    </citation>
    <scope>NUCLEOTIDE SEQUENCE [LARGE SCALE GENOMIC DNA]</scope>
</reference>
<reference key="2">
    <citation type="submission" date="2007-12" db="EMBL/GenBank/DDBJ databases">
        <authorList>
            <consortium name="NIH - Xenopus Gene Collection (XGC) project"/>
        </authorList>
    </citation>
    <scope>NUCLEOTIDE SEQUENCE [LARGE SCALE MRNA]</scope>
    <source>
        <tissue>Neurula</tissue>
        <tissue>Testis</tissue>
    </source>
</reference>
<keyword id="KW-0131">Cell cycle</keyword>
<keyword id="KW-0132">Cell division</keyword>
<keyword id="KW-0498">Mitosis</keyword>
<keyword id="KW-1185">Reference proteome</keyword>
<dbReference type="EMBL" id="AAMC01113660">
    <property type="status" value="NOT_ANNOTATED_CDS"/>
    <property type="molecule type" value="Genomic_DNA"/>
</dbReference>
<dbReference type="EMBL" id="BC155989">
    <property type="protein sequence ID" value="AAI55990.1"/>
    <property type="molecule type" value="mRNA"/>
</dbReference>
<dbReference type="EMBL" id="BC171286">
    <property type="protein sequence ID" value="AAI71286.1"/>
    <property type="molecule type" value="mRNA"/>
</dbReference>
<dbReference type="EMBL" id="BC171288">
    <property type="protein sequence ID" value="AAI71288.1"/>
    <property type="molecule type" value="mRNA"/>
</dbReference>
<dbReference type="RefSeq" id="NP_001107320.1">
    <property type="nucleotide sequence ID" value="NM_001113848.1"/>
</dbReference>
<dbReference type="RefSeq" id="XP_012819698.1">
    <property type="nucleotide sequence ID" value="XM_012964244.3"/>
</dbReference>
<dbReference type="SMR" id="A9JSB3"/>
<dbReference type="FunCoup" id="A9JSB3">
    <property type="interactions" value="1905"/>
</dbReference>
<dbReference type="STRING" id="8364.ENSXETP00000028220"/>
<dbReference type="GeneID" id="100135123"/>
<dbReference type="KEGG" id="xtr:100135123"/>
<dbReference type="AGR" id="Xenbase:XB-GENE-5892495"/>
<dbReference type="CTD" id="25906"/>
<dbReference type="Xenbase" id="XB-GENE-5892495">
    <property type="gene designation" value="anapc15"/>
</dbReference>
<dbReference type="HOGENOM" id="CLU_142923_0_0_1"/>
<dbReference type="InParanoid" id="A9JSB3"/>
<dbReference type="OMA" id="EGTDQDQ"/>
<dbReference type="OrthoDB" id="6362917at2759"/>
<dbReference type="PhylomeDB" id="A9JSB3"/>
<dbReference type="Reactome" id="R-XTR-141430">
    <property type="pathway name" value="Inactivation of APC/C via direct inhibition of the APC/C complex"/>
</dbReference>
<dbReference type="Reactome" id="R-XTR-174048">
    <property type="pathway name" value="APC/C:Cdc20 mediated degradation of Cyclin B"/>
</dbReference>
<dbReference type="Reactome" id="R-XTR-174084">
    <property type="pathway name" value="Autodegradation of Cdh1 by Cdh1:APC/C"/>
</dbReference>
<dbReference type="Reactome" id="R-XTR-174154">
    <property type="pathway name" value="APC/C:Cdc20 mediated degradation of Securin"/>
</dbReference>
<dbReference type="Reactome" id="R-XTR-174178">
    <property type="pathway name" value="APC/C:Cdh1 mediated degradation of Cdc20 and other APC/C:Cdh1 targeted proteins in late mitosis/early G1"/>
</dbReference>
<dbReference type="Reactome" id="R-XTR-174184">
    <property type="pathway name" value="Cdc20:Phospho-APC/C mediated degradation of Cyclin A"/>
</dbReference>
<dbReference type="Reactome" id="R-XTR-176407">
    <property type="pathway name" value="Conversion from APC/C:Cdc20 to APC/C:Cdh1 in late anaphase"/>
</dbReference>
<dbReference type="Reactome" id="R-XTR-176408">
    <property type="pathway name" value="Regulation of APC/C activators between G1/S and early anaphase"/>
</dbReference>
<dbReference type="Reactome" id="R-XTR-176409">
    <property type="pathway name" value="APC/C:Cdc20 mediated degradation of mitotic proteins"/>
</dbReference>
<dbReference type="Reactome" id="R-XTR-176412">
    <property type="pathway name" value="Phosphorylation of the APC/C"/>
</dbReference>
<dbReference type="Reactome" id="R-XTR-179409">
    <property type="pathway name" value="APC-Cdc20 mediated degradation of Nek2A"/>
</dbReference>
<dbReference type="Reactome" id="R-XTR-2467813">
    <property type="pathway name" value="Separation of Sister Chromatids"/>
</dbReference>
<dbReference type="Reactome" id="R-XTR-2559582">
    <property type="pathway name" value="Senescence-Associated Secretory Phenotype (SASP)"/>
</dbReference>
<dbReference type="Reactome" id="R-XTR-68867">
    <property type="pathway name" value="Assembly of the pre-replicative complex"/>
</dbReference>
<dbReference type="Reactome" id="R-XTR-69017">
    <property type="pathway name" value="CDK-mediated phosphorylation and removal of Cdc6"/>
</dbReference>
<dbReference type="UniPathway" id="UPA00143"/>
<dbReference type="Proteomes" id="UP000008143">
    <property type="component" value="Chromosome 6"/>
</dbReference>
<dbReference type="Bgee" id="ENSXETG00000023871">
    <property type="expression patterns" value="Expressed in testis and 12 other cell types or tissues"/>
</dbReference>
<dbReference type="GO" id="GO:0005680">
    <property type="term" value="C:anaphase-promoting complex"/>
    <property type="evidence" value="ECO:0000250"/>
    <property type="project" value="UniProtKB"/>
</dbReference>
<dbReference type="GO" id="GO:0031145">
    <property type="term" value="P:anaphase-promoting complex-dependent catabolic process"/>
    <property type="evidence" value="ECO:0000250"/>
    <property type="project" value="UniProtKB"/>
</dbReference>
<dbReference type="GO" id="GO:0051301">
    <property type="term" value="P:cell division"/>
    <property type="evidence" value="ECO:0007669"/>
    <property type="project" value="UniProtKB-KW"/>
</dbReference>
<dbReference type="GO" id="GO:0141198">
    <property type="term" value="P:protein branched polyubiquitination"/>
    <property type="evidence" value="ECO:0000250"/>
    <property type="project" value="UniProtKB"/>
</dbReference>
<dbReference type="GO" id="GO:0070979">
    <property type="term" value="P:protein K11-linked ubiquitination"/>
    <property type="evidence" value="ECO:0000250"/>
    <property type="project" value="UniProtKB"/>
</dbReference>
<dbReference type="GO" id="GO:0070936">
    <property type="term" value="P:protein K48-linked ubiquitination"/>
    <property type="evidence" value="ECO:0000250"/>
    <property type="project" value="UniProtKB"/>
</dbReference>
<dbReference type="GO" id="GO:0090266">
    <property type="term" value="P:regulation of mitotic cell cycle spindle assembly checkpoint"/>
    <property type="evidence" value="ECO:0000250"/>
    <property type="project" value="UniProtKB"/>
</dbReference>
<dbReference type="InterPro" id="IPR026182">
    <property type="entry name" value="ANAPC15"/>
</dbReference>
<dbReference type="PANTHER" id="PTHR22526">
    <property type="entry name" value="ANAPHASE PROMOTING COMPLEX C SUBUNIT 15, PSEUDOGENE-RELATED"/>
    <property type="match status" value="1"/>
</dbReference>
<dbReference type="PANTHER" id="PTHR22526:SF2">
    <property type="entry name" value="ANAPHASE PROMOTING COMPLEX C SUBUNIT 15, PSEUDOGENE-RELATED"/>
    <property type="match status" value="1"/>
</dbReference>
<dbReference type="Pfam" id="PF15243">
    <property type="entry name" value="ANAPC15"/>
    <property type="match status" value="1"/>
</dbReference>
<evidence type="ECO:0000250" key="1">
    <source>
        <dbReference type="UniProtKB" id="P60006"/>
    </source>
</evidence>
<evidence type="ECO:0000256" key="2">
    <source>
        <dbReference type="SAM" id="MobiDB-lite"/>
    </source>
</evidence>
<evidence type="ECO:0000305" key="3"/>
<feature type="chain" id="PRO_0000417542" description="Anaphase-promoting complex subunit 15">
    <location>
        <begin position="1"/>
        <end position="120"/>
    </location>
</feature>
<feature type="region of interest" description="Disordered" evidence="2">
    <location>
        <begin position="44"/>
        <end position="120"/>
    </location>
</feature>
<feature type="compositionally biased region" description="Acidic residues" evidence="2">
    <location>
        <begin position="61"/>
        <end position="120"/>
    </location>
</feature>
<comment type="function">
    <text evidence="1">Component of the anaphase promoting complex/cyclosome (APC/C), a cell cycle-regulated E3 ubiquitin ligase that controls progression through mitosis and the G1 phase of the cell cycle. The APC/C complex catalyzes assembly of branched 'Lys-11'-/'Lys-48'-linked branched ubiquitin chains on target proteins.</text>
</comment>
<comment type="pathway">
    <text evidence="1">Protein modification; protein ubiquitination.</text>
</comment>
<comment type="subunit">
    <text evidence="1">The APC/C is composed of at least 12 subunits.</text>
</comment>
<comment type="similarity">
    <text evidence="3">Belongs to the APC15 family.</text>
</comment>
<gene>
    <name type="primary">anapc15</name>
</gene>
<sequence length="120" mass="13969">MSTLFPSLFPQVTDSLWFNLDRPCVDENELQQQEQQHQAWLQSIAEKDNGLVPIGKPASEPYDEEEEEDDEDDEDSEEDSEDDEDMQDMDEMNDYNESPDDGEIEADMEGAEQDQDQWMI</sequence>
<accession>A9JSB3</accession>
<accession>F6YES5</accession>
<accession>F7C0B3</accession>
<protein>
    <recommendedName>
        <fullName>Anaphase-promoting complex subunit 15</fullName>
        <shortName>APC15</shortName>
    </recommendedName>
</protein>
<organism>
    <name type="scientific">Xenopus tropicalis</name>
    <name type="common">Western clawed frog</name>
    <name type="synonym">Silurana tropicalis</name>
    <dbReference type="NCBI Taxonomy" id="8364"/>
    <lineage>
        <taxon>Eukaryota</taxon>
        <taxon>Metazoa</taxon>
        <taxon>Chordata</taxon>
        <taxon>Craniata</taxon>
        <taxon>Vertebrata</taxon>
        <taxon>Euteleostomi</taxon>
        <taxon>Amphibia</taxon>
        <taxon>Batrachia</taxon>
        <taxon>Anura</taxon>
        <taxon>Pipoidea</taxon>
        <taxon>Pipidae</taxon>
        <taxon>Xenopodinae</taxon>
        <taxon>Xenopus</taxon>
        <taxon>Silurana</taxon>
    </lineage>
</organism>
<proteinExistence type="evidence at transcript level"/>
<name>APC15_XENTR</name>